<sequence>MQYGDQTTFKQSLAIQGRVINALLMREIITRYGRKNIGFLWLFVEPLLMTFFIVMMWKFIRADKFSTLNMIAFVMTGYPMAMMWRNASNRAIGSISANLSLLYHRNVRVLDTIFTRVLLEVAGASIAQILFMAVLVLIGWIDAPRDVFYMLMAWFLMAMFAFALGLIICAVAQQFDVFGKIWGTLSFVLLPISGAFFFVHNLPSQAQSIALWLPMIHGTEMFRHGYFGDTVVTYESIGFLVVSDLALLLMGLVMVKNFSKGIEPQ</sequence>
<dbReference type="EMBL" id="M33788">
    <property type="protein sequence ID" value="AAA24946.1"/>
    <property type="molecule type" value="Genomic_DNA"/>
</dbReference>
<dbReference type="SMR" id="P19391"/>
<dbReference type="GO" id="GO:0043190">
    <property type="term" value="C:ATP-binding cassette (ABC) transporter complex"/>
    <property type="evidence" value="ECO:0007669"/>
    <property type="project" value="InterPro"/>
</dbReference>
<dbReference type="GO" id="GO:0140359">
    <property type="term" value="F:ABC-type transporter activity"/>
    <property type="evidence" value="ECO:0007669"/>
    <property type="project" value="InterPro"/>
</dbReference>
<dbReference type="GO" id="GO:0015920">
    <property type="term" value="P:lipopolysaccharide transport"/>
    <property type="evidence" value="ECO:0007669"/>
    <property type="project" value="TreeGrafter"/>
</dbReference>
<dbReference type="GO" id="GO:0015774">
    <property type="term" value="P:polysaccharide transport"/>
    <property type="evidence" value="ECO:0007669"/>
    <property type="project" value="UniProtKB-KW"/>
</dbReference>
<dbReference type="InterPro" id="IPR013525">
    <property type="entry name" value="ABC2_TM"/>
</dbReference>
<dbReference type="InterPro" id="IPR047817">
    <property type="entry name" value="ABC2_TM_bact-type"/>
</dbReference>
<dbReference type="InterPro" id="IPR000412">
    <property type="entry name" value="ABC_2_transport"/>
</dbReference>
<dbReference type="PANTHER" id="PTHR30413:SF10">
    <property type="entry name" value="CAPSULE POLYSACCHARIDE EXPORT INNER-MEMBRANE PROTEIN CTRC"/>
    <property type="match status" value="1"/>
</dbReference>
<dbReference type="PANTHER" id="PTHR30413">
    <property type="entry name" value="INNER MEMBRANE TRANSPORT PERMEASE"/>
    <property type="match status" value="1"/>
</dbReference>
<dbReference type="Pfam" id="PF01061">
    <property type="entry name" value="ABC2_membrane"/>
    <property type="match status" value="1"/>
</dbReference>
<dbReference type="PRINTS" id="PR00164">
    <property type="entry name" value="ABC2TRNSPORT"/>
</dbReference>
<dbReference type="PROSITE" id="PS51012">
    <property type="entry name" value="ABC_TM2"/>
    <property type="match status" value="1"/>
</dbReference>
<feature type="chain" id="PRO_0000182977" description="Capsule polysaccharide export inner-membrane protein BexB">
    <location>
        <begin position="1"/>
        <end position="265"/>
    </location>
</feature>
<feature type="transmembrane region" description="Helical" evidence="1">
    <location>
        <begin position="37"/>
        <end position="57"/>
    </location>
</feature>
<feature type="transmembrane region" description="Helical" evidence="1">
    <location>
        <begin position="64"/>
        <end position="84"/>
    </location>
</feature>
<feature type="transmembrane region" description="Helical" evidence="1">
    <location>
        <begin position="121"/>
        <end position="141"/>
    </location>
</feature>
<feature type="transmembrane region" description="Helical" evidence="1">
    <location>
        <begin position="148"/>
        <end position="168"/>
    </location>
</feature>
<feature type="transmembrane region" description="Helical" evidence="1">
    <location>
        <begin position="178"/>
        <end position="198"/>
    </location>
</feature>
<feature type="transmembrane region" description="Helical" evidence="1">
    <location>
        <begin position="235"/>
        <end position="255"/>
    </location>
</feature>
<feature type="domain" description="ABC transmembrane type-2" evidence="2">
    <location>
        <begin position="37"/>
        <end position="258"/>
    </location>
</feature>
<name>BEXB2_HAEIF</name>
<comment type="function">
    <text>May form an ATP-driven capsule polysaccharide export apparatus, in association with the BexA, BexC and BexD proteins.</text>
</comment>
<comment type="subcellular location">
    <subcellularLocation>
        <location evidence="3">Cell inner membrane</location>
        <topology evidence="3">Multi-pass membrane protein</topology>
    </subcellularLocation>
</comment>
<comment type="similarity">
    <text evidence="3">Belongs to the ABC-2 integral membrane protein family.</text>
</comment>
<accession>P19391</accession>
<protein>
    <recommendedName>
        <fullName>Capsule polysaccharide export inner-membrane protein BexB</fullName>
    </recommendedName>
</protein>
<reference key="1">
    <citation type="journal article" date="1990" name="J. Bacteriol.">
        <title>Capsulation in distantly related strains of Haemophilus influenzae type b: genetic drift and gene transfer at the capsulation locus.</title>
        <authorList>
            <person name="Kroll J.S."/>
            <person name="Moxon E.R."/>
        </authorList>
    </citation>
    <scope>NUCLEOTIDE SEQUENCE [GENOMIC DNA]</scope>
    <source>
        <strain>RM 926 / Serotype B</strain>
    </source>
</reference>
<proteinExistence type="inferred from homology"/>
<keyword id="KW-0972">Capsule biogenesis/degradation</keyword>
<keyword id="KW-0997">Cell inner membrane</keyword>
<keyword id="KW-1003">Cell membrane</keyword>
<keyword id="KW-0472">Membrane</keyword>
<keyword id="KW-0625">Polysaccharide transport</keyword>
<keyword id="KW-0762">Sugar transport</keyword>
<keyword id="KW-0812">Transmembrane</keyword>
<keyword id="KW-1133">Transmembrane helix</keyword>
<keyword id="KW-0813">Transport</keyword>
<organism>
    <name type="scientific">Haemophilus influenzae</name>
    <dbReference type="NCBI Taxonomy" id="727"/>
    <lineage>
        <taxon>Bacteria</taxon>
        <taxon>Pseudomonadati</taxon>
        <taxon>Pseudomonadota</taxon>
        <taxon>Gammaproteobacteria</taxon>
        <taxon>Pasteurellales</taxon>
        <taxon>Pasteurellaceae</taxon>
        <taxon>Haemophilus</taxon>
    </lineage>
</organism>
<evidence type="ECO:0000255" key="1"/>
<evidence type="ECO:0000255" key="2">
    <source>
        <dbReference type="PROSITE-ProRule" id="PRU00442"/>
    </source>
</evidence>
<evidence type="ECO:0000305" key="3"/>
<gene>
    <name type="primary">bexB</name>
</gene>